<feature type="chain" id="PRO_0000215165" description="Probable alpha-1,6-mannosyltransferase MNN11">
    <location>
        <begin position="1"/>
        <end position="422"/>
    </location>
</feature>
<feature type="topological domain" description="Cytoplasmic" evidence="1">
    <location>
        <begin position="1"/>
        <end position="31"/>
    </location>
</feature>
<feature type="transmembrane region" description="Helical; Signal-anchor for type II membrane protein" evidence="1">
    <location>
        <begin position="32"/>
        <end position="52"/>
    </location>
</feature>
<feature type="topological domain" description="Lumenal" evidence="1">
    <location>
        <begin position="53"/>
        <end position="422"/>
    </location>
</feature>
<feature type="sequence conflict" description="In Ref. 1; CAA89478." evidence="6" ref="1">
    <original>D</original>
    <variation>G</variation>
    <location>
        <position position="298"/>
    </location>
</feature>
<proteinExistence type="evidence at protein level"/>
<organism>
    <name type="scientific">Saccharomyces cerevisiae (strain ATCC 204508 / S288c)</name>
    <name type="common">Baker's yeast</name>
    <dbReference type="NCBI Taxonomy" id="559292"/>
    <lineage>
        <taxon>Eukaryota</taxon>
        <taxon>Fungi</taxon>
        <taxon>Dikarya</taxon>
        <taxon>Ascomycota</taxon>
        <taxon>Saccharomycotina</taxon>
        <taxon>Saccharomycetes</taxon>
        <taxon>Saccharomycetales</taxon>
        <taxon>Saccharomycetaceae</taxon>
        <taxon>Saccharomyces</taxon>
    </lineage>
</organism>
<gene>
    <name type="primary">MNN11</name>
    <name type="ordered locus">YJL183W</name>
    <name type="ORF">J0425</name>
</gene>
<reference key="1">
    <citation type="journal article" date="1996" name="EMBO J.">
        <title>Complete nucleotide sequence of Saccharomyces cerevisiae chromosome X.</title>
        <authorList>
            <person name="Galibert F."/>
            <person name="Alexandraki D."/>
            <person name="Baur A."/>
            <person name="Boles E."/>
            <person name="Chalwatzis N."/>
            <person name="Chuat J.-C."/>
            <person name="Coster F."/>
            <person name="Cziepluch C."/>
            <person name="de Haan M."/>
            <person name="Domdey H."/>
            <person name="Durand P."/>
            <person name="Entian K.-D."/>
            <person name="Gatius M."/>
            <person name="Goffeau A."/>
            <person name="Grivell L.A."/>
            <person name="Hennemann A."/>
            <person name="Herbert C.J."/>
            <person name="Heumann K."/>
            <person name="Hilger F."/>
            <person name="Hollenberg C.P."/>
            <person name="Huang M.-E."/>
            <person name="Jacq C."/>
            <person name="Jauniaux J.-C."/>
            <person name="Katsoulou C."/>
            <person name="Kirchrath L."/>
            <person name="Kleine K."/>
            <person name="Kordes E."/>
            <person name="Koetter P."/>
            <person name="Liebl S."/>
            <person name="Louis E.J."/>
            <person name="Manus V."/>
            <person name="Mewes H.-W."/>
            <person name="Miosga T."/>
            <person name="Obermaier B."/>
            <person name="Perea J."/>
            <person name="Pohl T.M."/>
            <person name="Portetelle D."/>
            <person name="Pujol A."/>
            <person name="Purnelle B."/>
            <person name="Ramezani Rad M."/>
            <person name="Rasmussen S.W."/>
            <person name="Rose M."/>
            <person name="Rossau R."/>
            <person name="Schaaff-Gerstenschlaeger I."/>
            <person name="Smits P.H.M."/>
            <person name="Scarcez T."/>
            <person name="Soriano N."/>
            <person name="To Van D."/>
            <person name="Tzermia M."/>
            <person name="Van Broekhoven A."/>
            <person name="Vandenbol M."/>
            <person name="Wedler H."/>
            <person name="von Wettstein D."/>
            <person name="Wambutt R."/>
            <person name="Zagulski M."/>
            <person name="Zollner A."/>
            <person name="Karpfinger-Hartl L."/>
        </authorList>
    </citation>
    <scope>NUCLEOTIDE SEQUENCE [LARGE SCALE GENOMIC DNA]</scope>
    <source>
        <strain>ATCC 204508 / S288c</strain>
    </source>
</reference>
<reference key="2">
    <citation type="journal article" date="2014" name="G3 (Bethesda)">
        <title>The reference genome sequence of Saccharomyces cerevisiae: Then and now.</title>
        <authorList>
            <person name="Engel S.R."/>
            <person name="Dietrich F.S."/>
            <person name="Fisk D.G."/>
            <person name="Binkley G."/>
            <person name="Balakrishnan R."/>
            <person name="Costanzo M.C."/>
            <person name="Dwight S.S."/>
            <person name="Hitz B.C."/>
            <person name="Karra K."/>
            <person name="Nash R.S."/>
            <person name="Weng S."/>
            <person name="Wong E.D."/>
            <person name="Lloyd P."/>
            <person name="Skrzypek M.S."/>
            <person name="Miyasato S.R."/>
            <person name="Simison M."/>
            <person name="Cherry J.M."/>
        </authorList>
    </citation>
    <scope>GENOME REANNOTATION</scope>
    <scope>SEQUENCE REVISION TO 298</scope>
    <source>
        <strain>ATCC 204508 / S288c</strain>
    </source>
</reference>
<reference key="3">
    <citation type="journal article" date="2007" name="Genome Res.">
        <title>Approaching a complete repository of sequence-verified protein-encoding clones for Saccharomyces cerevisiae.</title>
        <authorList>
            <person name="Hu Y."/>
            <person name="Rolfs A."/>
            <person name="Bhullar B."/>
            <person name="Murthy T.V.S."/>
            <person name="Zhu C."/>
            <person name="Berger M.F."/>
            <person name="Camargo A.A."/>
            <person name="Kelley F."/>
            <person name="McCarron S."/>
            <person name="Jepson D."/>
            <person name="Richardson A."/>
            <person name="Raphael J."/>
            <person name="Moreira D."/>
            <person name="Taycher E."/>
            <person name="Zuo D."/>
            <person name="Mohr S."/>
            <person name="Kane M.F."/>
            <person name="Williamson J."/>
            <person name="Simpson A.J.G."/>
            <person name="Bulyk M.L."/>
            <person name="Harlow E."/>
            <person name="Marsischky G."/>
            <person name="Kolodner R.D."/>
            <person name="LaBaer J."/>
        </authorList>
    </citation>
    <scope>NUCLEOTIDE SEQUENCE [GENOMIC DNA]</scope>
    <source>
        <strain>ATCC 204508 / S288c</strain>
    </source>
</reference>
<reference key="4">
    <citation type="journal article" date="1998" name="EMBO J.">
        <title>Multi-protein complexes in the cis Golgi of Saccharomyces cerevisiae with alpha-1,6-mannosyltransferase activity.</title>
        <authorList>
            <person name="Jungmann J."/>
            <person name="Munro S."/>
        </authorList>
    </citation>
    <scope>PROTEIN SEQUENCE OF N-TERMINUS</scope>
    <scope>SUBUNIT</scope>
    <scope>SUBCELLULAR LOCATION</scope>
    <scope>ACTIVITY OF M-POL II COMPLEX</scope>
</reference>
<reference key="5">
    <citation type="journal article" date="1999" name="J. Biol. Chem.">
        <title>The Saccharomyces cerevisiae protein Mnn10p/Bed1p is a subunit of a Golgi mannosyltransferase complex.</title>
        <authorList>
            <person name="Jungmann J."/>
            <person name="Rayner J.C."/>
            <person name="Munro S."/>
        </authorList>
    </citation>
    <scope>FUNCTION</scope>
    <scope>SUBUNIT</scope>
</reference>
<reference key="6">
    <citation type="journal article" date="2003" name="Nature">
        <title>Global analysis of protein localization in budding yeast.</title>
        <authorList>
            <person name="Huh W.-K."/>
            <person name="Falvo J.V."/>
            <person name="Gerke L.C."/>
            <person name="Carroll A.S."/>
            <person name="Howson R.W."/>
            <person name="Weissman J.S."/>
            <person name="O'Shea E.K."/>
        </authorList>
    </citation>
    <scope>SUBCELLULAR LOCATION [LARGE SCALE ANALYSIS]</scope>
</reference>
<reference key="7">
    <citation type="journal article" date="2003" name="Nature">
        <title>Global analysis of protein expression in yeast.</title>
        <authorList>
            <person name="Ghaemmaghami S."/>
            <person name="Huh W.-K."/>
            <person name="Bower K."/>
            <person name="Howson R.W."/>
            <person name="Belle A."/>
            <person name="Dephoure N."/>
            <person name="O'Shea E.K."/>
            <person name="Weissman J.S."/>
        </authorList>
    </citation>
    <scope>LEVEL OF PROTEIN EXPRESSION [LARGE SCALE ANALYSIS]</scope>
</reference>
<comment type="function">
    <text evidence="2">Required for synthesis of full-length mannan chains.</text>
</comment>
<comment type="function">
    <text evidence="2">The M-Pol II complex possesses alpha-1,6-mannosyltransferase activity and is probably involved in the elongation of the mannan backbone of N-linked glycans on cell wall and periplasmic proteins.</text>
</comment>
<comment type="subunit">
    <text evidence="2 5">Component of the M-Pol II complex composed of ANP1, MNN9, MNN10, MNN11 and HOC1.</text>
</comment>
<comment type="interaction">
    <interactant intactId="EBI-11052">
        <id>P46985</id>
    </interactant>
    <interactant intactId="EBI-2595">
        <id>P32629</id>
        <label>ANP1</label>
    </interactant>
    <organismsDiffer>false</organismsDiffer>
    <experiments>4</experiments>
</comment>
<comment type="interaction">
    <interactant intactId="EBI-11052">
        <id>P46985</id>
    </interactant>
    <interactant intactId="EBI-8430">
        <id>P47124</id>
        <label>HOC1</label>
    </interactant>
    <organismsDiffer>false</organismsDiffer>
    <experiments>3</experiments>
</comment>
<comment type="interaction">
    <interactant intactId="EBI-11052">
        <id>P46985</id>
    </interactant>
    <interactant intactId="EBI-11043">
        <id>P50108</id>
        <label>MNN10</label>
    </interactant>
    <organismsDiffer>false</organismsDiffer>
    <experiments>6</experiments>
</comment>
<comment type="subcellular location">
    <subcellularLocation>
        <location evidence="3 5">Golgi apparatus</location>
        <location evidence="3 5">cis-Golgi network membrane</location>
        <topology evidence="3 5">Single-pass type II membrane protein</topology>
    </subcellularLocation>
</comment>
<comment type="miscellaneous">
    <text evidence="4">Present with 3480 molecules/cell in log phase SD medium.</text>
</comment>
<comment type="similarity">
    <text evidence="6">Belongs to the glycosyltransferase 34 family.</text>
</comment>
<evidence type="ECO:0000255" key="1"/>
<evidence type="ECO:0000269" key="2">
    <source>
    </source>
</evidence>
<evidence type="ECO:0000269" key="3">
    <source>
    </source>
</evidence>
<evidence type="ECO:0000269" key="4">
    <source>
    </source>
</evidence>
<evidence type="ECO:0000269" key="5">
    <source>
    </source>
</evidence>
<evidence type="ECO:0000305" key="6"/>
<dbReference type="EC" id="2.4.1.-"/>
<dbReference type="EMBL" id="Z49458">
    <property type="protein sequence ID" value="CAA89478.1"/>
    <property type="molecule type" value="Genomic_DNA"/>
</dbReference>
<dbReference type="EMBL" id="AY692909">
    <property type="protein sequence ID" value="AAT92928.1"/>
    <property type="molecule type" value="Genomic_DNA"/>
</dbReference>
<dbReference type="EMBL" id="BK006943">
    <property type="protein sequence ID" value="DAA08623.2"/>
    <property type="molecule type" value="Genomic_DNA"/>
</dbReference>
<dbReference type="PIR" id="S56966">
    <property type="entry name" value="S56966"/>
</dbReference>
<dbReference type="RefSeq" id="NP_012352.2">
    <property type="nucleotide sequence ID" value="NM_001181616.2"/>
</dbReference>
<dbReference type="BioGRID" id="33579">
    <property type="interactions" value="646"/>
</dbReference>
<dbReference type="ComplexPortal" id="CPX-1839">
    <property type="entry name" value="alpha-1,6-mannosyltransferase complex, M-Pol II variant"/>
</dbReference>
<dbReference type="DIP" id="DIP-914N"/>
<dbReference type="FunCoup" id="P46985">
    <property type="interactions" value="133"/>
</dbReference>
<dbReference type="IntAct" id="P46985">
    <property type="interactions" value="38"/>
</dbReference>
<dbReference type="STRING" id="4932.YJL183W"/>
<dbReference type="CAZy" id="GT34">
    <property type="family name" value="Glycosyltransferase Family 34"/>
</dbReference>
<dbReference type="iPTMnet" id="P46985"/>
<dbReference type="SwissPalm" id="P46985"/>
<dbReference type="PaxDb" id="4932-YJL183W"/>
<dbReference type="PeptideAtlas" id="P46985"/>
<dbReference type="EnsemblFungi" id="YJL183W_mRNA">
    <property type="protein sequence ID" value="YJL183W"/>
    <property type="gene ID" value="YJL183W"/>
</dbReference>
<dbReference type="GeneID" id="853256"/>
<dbReference type="KEGG" id="sce:YJL183W"/>
<dbReference type="AGR" id="SGD:S000003719"/>
<dbReference type="SGD" id="S000003719">
    <property type="gene designation" value="MNN11"/>
</dbReference>
<dbReference type="VEuPathDB" id="FungiDB:YJL183W"/>
<dbReference type="eggNOG" id="KOG4748">
    <property type="taxonomic scope" value="Eukaryota"/>
</dbReference>
<dbReference type="HOGENOM" id="CLU_021434_1_0_1"/>
<dbReference type="InParanoid" id="P46985"/>
<dbReference type="OMA" id="IKTYNHF"/>
<dbReference type="OrthoDB" id="205108at2759"/>
<dbReference type="BioCyc" id="MetaCyc:G3O-31617-MONOMER"/>
<dbReference type="BioCyc" id="YEAST:G3O-31617-MONOMER"/>
<dbReference type="BioGRID-ORCS" id="853256">
    <property type="hits" value="0 hits in 10 CRISPR screens"/>
</dbReference>
<dbReference type="PRO" id="PR:P46985"/>
<dbReference type="Proteomes" id="UP000002311">
    <property type="component" value="Chromosome X"/>
</dbReference>
<dbReference type="RNAct" id="P46985">
    <property type="molecule type" value="protein"/>
</dbReference>
<dbReference type="GO" id="GO:0005783">
    <property type="term" value="C:endoplasmic reticulum"/>
    <property type="evidence" value="ECO:0007005"/>
    <property type="project" value="SGD"/>
</dbReference>
<dbReference type="GO" id="GO:0000139">
    <property type="term" value="C:Golgi membrane"/>
    <property type="evidence" value="ECO:0000318"/>
    <property type="project" value="GO_Central"/>
</dbReference>
<dbReference type="GO" id="GO:0000136">
    <property type="term" value="C:mannan polymerase complex"/>
    <property type="evidence" value="ECO:0000314"/>
    <property type="project" value="UniProtKB"/>
</dbReference>
<dbReference type="GO" id="GO:0000009">
    <property type="term" value="F:alpha-1,6-mannosyltransferase activity"/>
    <property type="evidence" value="ECO:0000314"/>
    <property type="project" value="UniProtKB"/>
</dbReference>
<dbReference type="GO" id="GO:0000032">
    <property type="term" value="P:cell wall mannoprotein biosynthetic process"/>
    <property type="evidence" value="ECO:0000314"/>
    <property type="project" value="UniProtKB"/>
</dbReference>
<dbReference type="GO" id="GO:0006486">
    <property type="term" value="P:protein glycosylation"/>
    <property type="evidence" value="ECO:0000314"/>
    <property type="project" value="SGD"/>
</dbReference>
<dbReference type="GO" id="GO:0006487">
    <property type="term" value="P:protein N-linked glycosylation"/>
    <property type="evidence" value="ECO:0000315"/>
    <property type="project" value="SGD"/>
</dbReference>
<dbReference type="FunFam" id="3.90.550.10:FF:000212">
    <property type="entry name" value="Mannosyltransferase complex component"/>
    <property type="match status" value="1"/>
</dbReference>
<dbReference type="Gene3D" id="3.90.550.10">
    <property type="entry name" value="Spore Coat Polysaccharide Biosynthesis Protein SpsA, Chain A"/>
    <property type="match status" value="1"/>
</dbReference>
<dbReference type="InterPro" id="IPR008630">
    <property type="entry name" value="Glyco_trans_34"/>
</dbReference>
<dbReference type="InterPro" id="IPR029044">
    <property type="entry name" value="Nucleotide-diphossugar_trans"/>
</dbReference>
<dbReference type="PANTHER" id="PTHR31306">
    <property type="entry name" value="ALPHA-1,6-MANNOSYLTRANSFERASE MNN11-RELATED"/>
    <property type="match status" value="1"/>
</dbReference>
<dbReference type="PANTHER" id="PTHR31306:SF10">
    <property type="entry name" value="ALPHA-1,6-MANNOSYLTRANSFERASE MNN11-RELATED"/>
    <property type="match status" value="1"/>
</dbReference>
<dbReference type="Pfam" id="PF05637">
    <property type="entry name" value="Glyco_transf_34"/>
    <property type="match status" value="1"/>
</dbReference>
<sequence>MAIKPRTKGKTYSSRSVGSQWFNRLGFKQNKYGTCKFLSIITAFVFILYFFSNRFYPISRSAGASYSPSHGLYINEIPASSRLIYPHVEHVPVLKQMTVRGLYITRLEVDGSKRLILKPEENALTDEEKKKTTDQILLVKHSFLDHGKLVYRKSNDAPEVVVVTLIDFENYELETIIQIVQNRVDYAQKHQYGVYIRWIQEFLPVLENQNLAESYEFIKPLVIRAAMHAFPTAKYIHFVDQDALLMNLDLSLQKYLLDPKIMDLALLKNVPVVANSNIKTYNHFEYSSAKIIIPHDADGNIDASSFVIANDFYGKALIDYLNDPLLRNFPWDNTGDKLSAAIGHILQWHPTLLGKTAIVIPKVLASQYDASLDQEGESGNGASNGDVYHYNEGDLAASFKGCRSRGTCASEIGHMYQKIKKS</sequence>
<name>MNN11_YEAST</name>
<accession>P46985</accession>
<accession>D6VW07</accession>
<accession>E9P8Z0</accession>
<keyword id="KW-0903">Direct protein sequencing</keyword>
<keyword id="KW-0328">Glycosyltransferase</keyword>
<keyword id="KW-0333">Golgi apparatus</keyword>
<keyword id="KW-0472">Membrane</keyword>
<keyword id="KW-1185">Reference proteome</keyword>
<keyword id="KW-0735">Signal-anchor</keyword>
<keyword id="KW-0808">Transferase</keyword>
<keyword id="KW-0812">Transmembrane</keyword>
<keyword id="KW-1133">Transmembrane helix</keyword>
<protein>
    <recommendedName>
        <fullName>Probable alpha-1,6-mannosyltransferase MNN11</fullName>
        <ecNumber>2.4.1.-</ecNumber>
    </recommendedName>
    <alternativeName>
        <fullName>Mannan polymerase II complex MNN11 subunit</fullName>
        <shortName>M-Pol II subunit MNN11</shortName>
    </alternativeName>
</protein>